<accession>P36579</accession>
<organism>
    <name type="scientific">Schizosaccharomyces pombe (strain 972 / ATCC 24843)</name>
    <name type="common">Fission yeast</name>
    <dbReference type="NCBI Taxonomy" id="284812"/>
    <lineage>
        <taxon>Eukaryota</taxon>
        <taxon>Fungi</taxon>
        <taxon>Dikarya</taxon>
        <taxon>Ascomycota</taxon>
        <taxon>Taphrinomycotina</taxon>
        <taxon>Schizosaccharomycetes</taxon>
        <taxon>Schizosaccharomycetales</taxon>
        <taxon>Schizosaccharomycetaceae</taxon>
        <taxon>Schizosaccharomyces</taxon>
    </lineage>
</organism>
<gene>
    <name type="primary">arf1</name>
    <name type="ORF">SPBC4F6.18c</name>
</gene>
<proteinExistence type="evidence at transcript level"/>
<sequence length="180" mass="20619">MGLSISKLFQSLFGKREMRILMVGLDAAGKTTILYKLKLGEIVTTIPTIGFNVETVEYRNISFTVWDVGGQDKIRPLWRHYFQNTQGIIFVVDSNDRERISEAHEELQRMLNEDELRDALLLVFANKQDLPNAMNAAEITDKLGLHSLRHRQWYIQATCATSGDGLYEGLEWLSTNLKNQ</sequence>
<dbReference type="EC" id="3.6.5.2" evidence="2"/>
<dbReference type="EMBL" id="L09551">
    <property type="protein sequence ID" value="AAC37347.1"/>
    <property type="molecule type" value="mRNA"/>
</dbReference>
<dbReference type="EMBL" id="CU329671">
    <property type="protein sequence ID" value="CAA20738.1"/>
    <property type="molecule type" value="Genomic_DNA"/>
</dbReference>
<dbReference type="PIR" id="S37599">
    <property type="entry name" value="S37599"/>
</dbReference>
<dbReference type="RefSeq" id="NP_596118.1">
    <property type="nucleotide sequence ID" value="NM_001022035.2"/>
</dbReference>
<dbReference type="SMR" id="P36579"/>
<dbReference type="BioGRID" id="277415">
    <property type="interactions" value="6"/>
</dbReference>
<dbReference type="FunCoup" id="P36579">
    <property type="interactions" value="539"/>
</dbReference>
<dbReference type="STRING" id="284812.P36579"/>
<dbReference type="iPTMnet" id="P36579"/>
<dbReference type="PaxDb" id="4896-SPBC4F6.18c.1"/>
<dbReference type="EnsemblFungi" id="SPBC4F6.18c.1">
    <property type="protein sequence ID" value="SPBC4F6.18c.1:pep"/>
    <property type="gene ID" value="SPBC4F6.18c"/>
</dbReference>
<dbReference type="GeneID" id="2540899"/>
<dbReference type="KEGG" id="spo:2540899"/>
<dbReference type="PomBase" id="SPBC4F6.18c">
    <property type="gene designation" value="arf1"/>
</dbReference>
<dbReference type="VEuPathDB" id="FungiDB:SPBC4F6.18c"/>
<dbReference type="eggNOG" id="KOG0070">
    <property type="taxonomic scope" value="Eukaryota"/>
</dbReference>
<dbReference type="HOGENOM" id="CLU_040729_9_3_1"/>
<dbReference type="InParanoid" id="P36579"/>
<dbReference type="OMA" id="HYYANTN"/>
<dbReference type="PhylomeDB" id="P36579"/>
<dbReference type="Reactome" id="R-SPO-1660514">
    <property type="pathway name" value="Synthesis of PIPs at the Golgi membrane"/>
</dbReference>
<dbReference type="Reactome" id="R-SPO-199992">
    <property type="pathway name" value="trans-Golgi Network Vesicle Budding"/>
</dbReference>
<dbReference type="Reactome" id="R-SPO-5620916">
    <property type="pathway name" value="VxPx cargo-targeting to cilium"/>
</dbReference>
<dbReference type="Reactome" id="R-SPO-6807878">
    <property type="pathway name" value="COPI-mediated anterograde transport"/>
</dbReference>
<dbReference type="Reactome" id="R-SPO-6811434">
    <property type="pathway name" value="COPI-dependent Golgi-to-ER retrograde traffic"/>
</dbReference>
<dbReference type="Reactome" id="R-SPO-6811438">
    <property type="pathway name" value="Intra-Golgi traffic"/>
</dbReference>
<dbReference type="PRO" id="PR:P36579"/>
<dbReference type="Proteomes" id="UP000002485">
    <property type="component" value="Chromosome II"/>
</dbReference>
<dbReference type="GO" id="GO:0005737">
    <property type="term" value="C:cytoplasm"/>
    <property type="evidence" value="ECO:0000318"/>
    <property type="project" value="GO_Central"/>
</dbReference>
<dbReference type="GO" id="GO:0005794">
    <property type="term" value="C:Golgi apparatus"/>
    <property type="evidence" value="ECO:0000314"/>
    <property type="project" value="PomBase"/>
</dbReference>
<dbReference type="GO" id="GO:0005886">
    <property type="term" value="C:plasma membrane"/>
    <property type="evidence" value="ECO:0000318"/>
    <property type="project" value="GO_Central"/>
</dbReference>
<dbReference type="GO" id="GO:0005525">
    <property type="term" value="F:GTP binding"/>
    <property type="evidence" value="ECO:0000318"/>
    <property type="project" value="GO_Central"/>
</dbReference>
<dbReference type="GO" id="GO:0003924">
    <property type="term" value="F:GTPase activity"/>
    <property type="evidence" value="ECO:0000250"/>
    <property type="project" value="PomBase"/>
</dbReference>
<dbReference type="GO" id="GO:0006888">
    <property type="term" value="P:endoplasmic reticulum to Golgi vesicle-mediated transport"/>
    <property type="evidence" value="ECO:0000250"/>
    <property type="project" value="PomBase"/>
</dbReference>
<dbReference type="GO" id="GO:0006886">
    <property type="term" value="P:intracellular protein transport"/>
    <property type="evidence" value="ECO:0000318"/>
    <property type="project" value="GO_Central"/>
</dbReference>
<dbReference type="GO" id="GO:0016192">
    <property type="term" value="P:vesicle-mediated transport"/>
    <property type="evidence" value="ECO:0000318"/>
    <property type="project" value="GO_Central"/>
</dbReference>
<dbReference type="CDD" id="cd04150">
    <property type="entry name" value="Arf1_5_like"/>
    <property type="match status" value="1"/>
</dbReference>
<dbReference type="FunFam" id="3.40.50.300:FF:000554">
    <property type="entry name" value="ADP-ribosylation factor 1"/>
    <property type="match status" value="1"/>
</dbReference>
<dbReference type="Gene3D" id="3.40.50.300">
    <property type="entry name" value="P-loop containing nucleotide triphosphate hydrolases"/>
    <property type="match status" value="1"/>
</dbReference>
<dbReference type="InterPro" id="IPR045872">
    <property type="entry name" value="Arf1-5-like"/>
</dbReference>
<dbReference type="InterPro" id="IPR027417">
    <property type="entry name" value="P-loop_NTPase"/>
</dbReference>
<dbReference type="InterPro" id="IPR005225">
    <property type="entry name" value="Small_GTP-bd"/>
</dbReference>
<dbReference type="InterPro" id="IPR024156">
    <property type="entry name" value="Small_GTPase_ARF"/>
</dbReference>
<dbReference type="InterPro" id="IPR006689">
    <property type="entry name" value="Small_GTPase_ARF/SAR"/>
</dbReference>
<dbReference type="NCBIfam" id="TIGR00231">
    <property type="entry name" value="small_GTP"/>
    <property type="match status" value="1"/>
</dbReference>
<dbReference type="PANTHER" id="PTHR11711">
    <property type="entry name" value="ADP RIBOSYLATION FACTOR-RELATED"/>
    <property type="match status" value="1"/>
</dbReference>
<dbReference type="Pfam" id="PF00025">
    <property type="entry name" value="Arf"/>
    <property type="match status" value="1"/>
</dbReference>
<dbReference type="PRINTS" id="PR00328">
    <property type="entry name" value="SAR1GTPBP"/>
</dbReference>
<dbReference type="SMART" id="SM00177">
    <property type="entry name" value="ARF"/>
    <property type="match status" value="1"/>
</dbReference>
<dbReference type="SMART" id="SM00175">
    <property type="entry name" value="RAB"/>
    <property type="match status" value="1"/>
</dbReference>
<dbReference type="SMART" id="SM00178">
    <property type="entry name" value="SAR"/>
    <property type="match status" value="1"/>
</dbReference>
<dbReference type="SUPFAM" id="SSF52540">
    <property type="entry name" value="P-loop containing nucleoside triphosphate hydrolases"/>
    <property type="match status" value="1"/>
</dbReference>
<dbReference type="PROSITE" id="PS51417">
    <property type="entry name" value="ARF"/>
    <property type="match status" value="1"/>
</dbReference>
<name>ARF1_SCHPO</name>
<keyword id="KW-0931">ER-Golgi transport</keyword>
<keyword id="KW-0333">Golgi apparatus</keyword>
<keyword id="KW-0342">GTP-binding</keyword>
<keyword id="KW-0378">Hydrolase</keyword>
<keyword id="KW-0449">Lipoprotein</keyword>
<keyword id="KW-0519">Myristate</keyword>
<keyword id="KW-0547">Nucleotide-binding</keyword>
<keyword id="KW-0653">Protein transport</keyword>
<keyword id="KW-1185">Reference proteome</keyword>
<keyword id="KW-0813">Transport</keyword>
<protein>
    <recommendedName>
        <fullName>ADP-ribosylation factor 1</fullName>
        <ecNumber evidence="2">3.6.5.2</ecNumber>
    </recommendedName>
</protein>
<reference key="1">
    <citation type="journal article" date="1993" name="Yeast">
        <title>Cloning and sequence of ADP-ribosylation factor 1 (ARF1) from Schizosaccharomyces pombe.</title>
        <authorList>
            <person name="Erickson F.L."/>
            <person name="Hannig E.M."/>
            <person name="Krasinskas A."/>
            <person name="Kahn R.A."/>
        </authorList>
    </citation>
    <scope>NUCLEOTIDE SEQUENCE [MRNA]</scope>
</reference>
<reference key="2">
    <citation type="journal article" date="2002" name="Nature">
        <title>The genome sequence of Schizosaccharomyces pombe.</title>
        <authorList>
            <person name="Wood V."/>
            <person name="Gwilliam R."/>
            <person name="Rajandream M.A."/>
            <person name="Lyne M.H."/>
            <person name="Lyne R."/>
            <person name="Stewart A."/>
            <person name="Sgouros J.G."/>
            <person name="Peat N."/>
            <person name="Hayles J."/>
            <person name="Baker S.G."/>
            <person name="Basham D."/>
            <person name="Bowman S."/>
            <person name="Brooks K."/>
            <person name="Brown D."/>
            <person name="Brown S."/>
            <person name="Chillingworth T."/>
            <person name="Churcher C.M."/>
            <person name="Collins M."/>
            <person name="Connor R."/>
            <person name="Cronin A."/>
            <person name="Davis P."/>
            <person name="Feltwell T."/>
            <person name="Fraser A."/>
            <person name="Gentles S."/>
            <person name="Goble A."/>
            <person name="Hamlin N."/>
            <person name="Harris D.E."/>
            <person name="Hidalgo J."/>
            <person name="Hodgson G."/>
            <person name="Holroyd S."/>
            <person name="Hornsby T."/>
            <person name="Howarth S."/>
            <person name="Huckle E.J."/>
            <person name="Hunt S."/>
            <person name="Jagels K."/>
            <person name="James K.D."/>
            <person name="Jones L."/>
            <person name="Jones M."/>
            <person name="Leather S."/>
            <person name="McDonald S."/>
            <person name="McLean J."/>
            <person name="Mooney P."/>
            <person name="Moule S."/>
            <person name="Mungall K.L."/>
            <person name="Murphy L.D."/>
            <person name="Niblett D."/>
            <person name="Odell C."/>
            <person name="Oliver K."/>
            <person name="O'Neil S."/>
            <person name="Pearson D."/>
            <person name="Quail M.A."/>
            <person name="Rabbinowitsch E."/>
            <person name="Rutherford K.M."/>
            <person name="Rutter S."/>
            <person name="Saunders D."/>
            <person name="Seeger K."/>
            <person name="Sharp S."/>
            <person name="Skelton J."/>
            <person name="Simmonds M.N."/>
            <person name="Squares R."/>
            <person name="Squares S."/>
            <person name="Stevens K."/>
            <person name="Taylor K."/>
            <person name="Taylor R.G."/>
            <person name="Tivey A."/>
            <person name="Walsh S.V."/>
            <person name="Warren T."/>
            <person name="Whitehead S."/>
            <person name="Woodward J.R."/>
            <person name="Volckaert G."/>
            <person name="Aert R."/>
            <person name="Robben J."/>
            <person name="Grymonprez B."/>
            <person name="Weltjens I."/>
            <person name="Vanstreels E."/>
            <person name="Rieger M."/>
            <person name="Schaefer M."/>
            <person name="Mueller-Auer S."/>
            <person name="Gabel C."/>
            <person name="Fuchs M."/>
            <person name="Duesterhoeft A."/>
            <person name="Fritzc C."/>
            <person name="Holzer E."/>
            <person name="Moestl D."/>
            <person name="Hilbert H."/>
            <person name="Borzym K."/>
            <person name="Langer I."/>
            <person name="Beck A."/>
            <person name="Lehrach H."/>
            <person name="Reinhardt R."/>
            <person name="Pohl T.M."/>
            <person name="Eger P."/>
            <person name="Zimmermann W."/>
            <person name="Wedler H."/>
            <person name="Wambutt R."/>
            <person name="Purnelle B."/>
            <person name="Goffeau A."/>
            <person name="Cadieu E."/>
            <person name="Dreano S."/>
            <person name="Gloux S."/>
            <person name="Lelaure V."/>
            <person name="Mottier S."/>
            <person name="Galibert F."/>
            <person name="Aves S.J."/>
            <person name="Xiang Z."/>
            <person name="Hunt C."/>
            <person name="Moore K."/>
            <person name="Hurst S.M."/>
            <person name="Lucas M."/>
            <person name="Rochet M."/>
            <person name="Gaillardin C."/>
            <person name="Tallada V.A."/>
            <person name="Garzon A."/>
            <person name="Thode G."/>
            <person name="Daga R.R."/>
            <person name="Cruzado L."/>
            <person name="Jimenez J."/>
            <person name="Sanchez M."/>
            <person name="del Rey F."/>
            <person name="Benito J."/>
            <person name="Dominguez A."/>
            <person name="Revuelta J.L."/>
            <person name="Moreno S."/>
            <person name="Armstrong J."/>
            <person name="Forsburg S.L."/>
            <person name="Cerutti L."/>
            <person name="Lowe T."/>
            <person name="McCombie W.R."/>
            <person name="Paulsen I."/>
            <person name="Potashkin J."/>
            <person name="Shpakovski G.V."/>
            <person name="Ussery D."/>
            <person name="Barrell B.G."/>
            <person name="Nurse P."/>
        </authorList>
    </citation>
    <scope>NUCLEOTIDE SEQUENCE [LARGE SCALE GENOMIC DNA]</scope>
    <source>
        <strain>972 / ATCC 24843</strain>
    </source>
</reference>
<comment type="function">
    <text>GTP-binding protein involved in protein trafficking; may modulate vesicle budding and uncoating within the Golgi apparatus.</text>
</comment>
<comment type="catalytic activity">
    <reaction evidence="2">
        <text>GTP + H2O = GDP + phosphate + H(+)</text>
        <dbReference type="Rhea" id="RHEA:19669"/>
        <dbReference type="ChEBI" id="CHEBI:15377"/>
        <dbReference type="ChEBI" id="CHEBI:15378"/>
        <dbReference type="ChEBI" id="CHEBI:37565"/>
        <dbReference type="ChEBI" id="CHEBI:43474"/>
        <dbReference type="ChEBI" id="CHEBI:58189"/>
        <dbReference type="EC" id="3.6.5.2"/>
    </reaction>
</comment>
<comment type="subcellular location">
    <subcellularLocation>
        <location>Golgi apparatus</location>
    </subcellularLocation>
</comment>
<comment type="similarity">
    <text evidence="3">Belongs to the small GTPase superfamily. Arf family.</text>
</comment>
<evidence type="ECO:0000250" key="1"/>
<evidence type="ECO:0000250" key="2">
    <source>
        <dbReference type="UniProtKB" id="P84077"/>
    </source>
</evidence>
<evidence type="ECO:0000305" key="3"/>
<feature type="initiator methionine" description="Removed" evidence="1">
    <location>
        <position position="1"/>
    </location>
</feature>
<feature type="chain" id="PRO_0000207416" description="ADP-ribosylation factor 1">
    <location>
        <begin position="2"/>
        <end position="180"/>
    </location>
</feature>
<feature type="binding site" evidence="1">
    <location>
        <begin position="24"/>
        <end position="31"/>
    </location>
    <ligand>
        <name>GTP</name>
        <dbReference type="ChEBI" id="CHEBI:37565"/>
    </ligand>
</feature>
<feature type="binding site" evidence="1">
    <location>
        <begin position="67"/>
        <end position="71"/>
    </location>
    <ligand>
        <name>GTP</name>
        <dbReference type="ChEBI" id="CHEBI:37565"/>
    </ligand>
</feature>
<feature type="binding site" evidence="1">
    <location>
        <begin position="126"/>
        <end position="129"/>
    </location>
    <ligand>
        <name>GTP</name>
        <dbReference type="ChEBI" id="CHEBI:37565"/>
    </ligand>
</feature>
<feature type="lipid moiety-binding region" description="N-myristoyl glycine" evidence="1">
    <location>
        <position position="2"/>
    </location>
</feature>